<reference key="1">
    <citation type="journal article" date="2009" name="Genome Biol.">
        <title>Genomic and genetic analyses of diversity and plant interactions of Pseudomonas fluorescens.</title>
        <authorList>
            <person name="Silby M.W."/>
            <person name="Cerdeno-Tarraga A.M."/>
            <person name="Vernikos G.S."/>
            <person name="Giddens S.R."/>
            <person name="Jackson R.W."/>
            <person name="Preston G.M."/>
            <person name="Zhang X.-X."/>
            <person name="Moon C.D."/>
            <person name="Gehrig S.M."/>
            <person name="Godfrey S.A.C."/>
            <person name="Knight C.G."/>
            <person name="Malone J.G."/>
            <person name="Robinson Z."/>
            <person name="Spiers A.J."/>
            <person name="Harris S."/>
            <person name="Challis G.L."/>
            <person name="Yaxley A.M."/>
            <person name="Harris D."/>
            <person name="Seeger K."/>
            <person name="Murphy L."/>
            <person name="Rutter S."/>
            <person name="Squares R."/>
            <person name="Quail M.A."/>
            <person name="Saunders E."/>
            <person name="Mavromatis K."/>
            <person name="Brettin T.S."/>
            <person name="Bentley S.D."/>
            <person name="Hothersall J."/>
            <person name="Stephens E."/>
            <person name="Thomas C.M."/>
            <person name="Parkhill J."/>
            <person name="Levy S.B."/>
            <person name="Rainey P.B."/>
            <person name="Thomson N.R."/>
        </authorList>
    </citation>
    <scope>NUCLEOTIDE SEQUENCE [LARGE SCALE GENOMIC DNA]</scope>
    <source>
        <strain>Pf0-1</strain>
    </source>
</reference>
<evidence type="ECO:0000255" key="1">
    <source>
        <dbReference type="HAMAP-Rule" id="MF_01366"/>
    </source>
</evidence>
<evidence type="ECO:0000305" key="2"/>
<feature type="chain" id="PRO_0000261771" description="Large ribosomal subunit protein uL13">
    <location>
        <begin position="1"/>
        <end position="142"/>
    </location>
</feature>
<sequence>MKTFTAKPETVKRDWFVVDAAGQTLGRLATEIASRLRGKHKPEYTPHVDTGDYIVVINAEQIRVTGAKTTDKMYYSHSGFPGGIKSINFEKLIAKAPERVIETAVKGMLPKNPLGRDMYRKLKVYAGAAHPHTAQQPQELKI</sequence>
<protein>
    <recommendedName>
        <fullName evidence="1">Large ribosomal subunit protein uL13</fullName>
    </recommendedName>
    <alternativeName>
        <fullName evidence="2">50S ribosomal protein L13</fullName>
    </alternativeName>
</protein>
<comment type="function">
    <text evidence="1">This protein is one of the early assembly proteins of the 50S ribosomal subunit, although it is not seen to bind rRNA by itself. It is important during the early stages of 50S assembly.</text>
</comment>
<comment type="subunit">
    <text evidence="1">Part of the 50S ribosomal subunit.</text>
</comment>
<comment type="similarity">
    <text evidence="1">Belongs to the universal ribosomal protein uL13 family.</text>
</comment>
<accession>Q3K723</accession>
<organism>
    <name type="scientific">Pseudomonas fluorescens (strain Pf0-1)</name>
    <dbReference type="NCBI Taxonomy" id="205922"/>
    <lineage>
        <taxon>Bacteria</taxon>
        <taxon>Pseudomonadati</taxon>
        <taxon>Pseudomonadota</taxon>
        <taxon>Gammaproteobacteria</taxon>
        <taxon>Pseudomonadales</taxon>
        <taxon>Pseudomonadaceae</taxon>
        <taxon>Pseudomonas</taxon>
    </lineage>
</organism>
<gene>
    <name evidence="1" type="primary">rplM</name>
    <name type="ordered locus">Pfl01_4694</name>
</gene>
<keyword id="KW-0687">Ribonucleoprotein</keyword>
<keyword id="KW-0689">Ribosomal protein</keyword>
<proteinExistence type="inferred from homology"/>
<dbReference type="EMBL" id="CP000094">
    <property type="protein sequence ID" value="ABA76431.1"/>
    <property type="molecule type" value="Genomic_DNA"/>
</dbReference>
<dbReference type="RefSeq" id="WP_003228062.1">
    <property type="nucleotide sequence ID" value="NC_007492.2"/>
</dbReference>
<dbReference type="SMR" id="Q3K723"/>
<dbReference type="GeneID" id="89623202"/>
<dbReference type="KEGG" id="pfo:Pfl01_4694"/>
<dbReference type="eggNOG" id="COG0102">
    <property type="taxonomic scope" value="Bacteria"/>
</dbReference>
<dbReference type="HOGENOM" id="CLU_082184_2_2_6"/>
<dbReference type="Proteomes" id="UP000002704">
    <property type="component" value="Chromosome"/>
</dbReference>
<dbReference type="GO" id="GO:0022625">
    <property type="term" value="C:cytosolic large ribosomal subunit"/>
    <property type="evidence" value="ECO:0007669"/>
    <property type="project" value="TreeGrafter"/>
</dbReference>
<dbReference type="GO" id="GO:0003729">
    <property type="term" value="F:mRNA binding"/>
    <property type="evidence" value="ECO:0007669"/>
    <property type="project" value="TreeGrafter"/>
</dbReference>
<dbReference type="GO" id="GO:0003735">
    <property type="term" value="F:structural constituent of ribosome"/>
    <property type="evidence" value="ECO:0007669"/>
    <property type="project" value="InterPro"/>
</dbReference>
<dbReference type="GO" id="GO:0017148">
    <property type="term" value="P:negative regulation of translation"/>
    <property type="evidence" value="ECO:0007669"/>
    <property type="project" value="TreeGrafter"/>
</dbReference>
<dbReference type="GO" id="GO:0006412">
    <property type="term" value="P:translation"/>
    <property type="evidence" value="ECO:0007669"/>
    <property type="project" value="UniProtKB-UniRule"/>
</dbReference>
<dbReference type="CDD" id="cd00392">
    <property type="entry name" value="Ribosomal_L13"/>
    <property type="match status" value="1"/>
</dbReference>
<dbReference type="FunFam" id="3.90.1180.10:FF:000001">
    <property type="entry name" value="50S ribosomal protein L13"/>
    <property type="match status" value="1"/>
</dbReference>
<dbReference type="Gene3D" id="3.90.1180.10">
    <property type="entry name" value="Ribosomal protein L13"/>
    <property type="match status" value="1"/>
</dbReference>
<dbReference type="HAMAP" id="MF_01366">
    <property type="entry name" value="Ribosomal_uL13"/>
    <property type="match status" value="1"/>
</dbReference>
<dbReference type="InterPro" id="IPR005822">
    <property type="entry name" value="Ribosomal_uL13"/>
</dbReference>
<dbReference type="InterPro" id="IPR005823">
    <property type="entry name" value="Ribosomal_uL13_bac-type"/>
</dbReference>
<dbReference type="InterPro" id="IPR023563">
    <property type="entry name" value="Ribosomal_uL13_CS"/>
</dbReference>
<dbReference type="InterPro" id="IPR036899">
    <property type="entry name" value="Ribosomal_uL13_sf"/>
</dbReference>
<dbReference type="NCBIfam" id="TIGR01066">
    <property type="entry name" value="rplM_bact"/>
    <property type="match status" value="1"/>
</dbReference>
<dbReference type="PANTHER" id="PTHR11545:SF2">
    <property type="entry name" value="LARGE RIBOSOMAL SUBUNIT PROTEIN UL13M"/>
    <property type="match status" value="1"/>
</dbReference>
<dbReference type="PANTHER" id="PTHR11545">
    <property type="entry name" value="RIBOSOMAL PROTEIN L13"/>
    <property type="match status" value="1"/>
</dbReference>
<dbReference type="Pfam" id="PF00572">
    <property type="entry name" value="Ribosomal_L13"/>
    <property type="match status" value="1"/>
</dbReference>
<dbReference type="PIRSF" id="PIRSF002181">
    <property type="entry name" value="Ribosomal_L13"/>
    <property type="match status" value="1"/>
</dbReference>
<dbReference type="SUPFAM" id="SSF52161">
    <property type="entry name" value="Ribosomal protein L13"/>
    <property type="match status" value="1"/>
</dbReference>
<dbReference type="PROSITE" id="PS00783">
    <property type="entry name" value="RIBOSOMAL_L13"/>
    <property type="match status" value="1"/>
</dbReference>
<name>RL13_PSEPF</name>